<accession>O55188</accession>
<accession>Q3TZB6</accession>
<comment type="function">
    <text evidence="1">May have a dual function during osteoblast differentiation. In the nucleus of undifferentiated osteoblasts, unphosphorylated form acts as a transcriptional component for activation of osteoblast-specific genes like osteocalcin. During the osteoblast to osteocyte transition phase it is phosphorylated and exported into the extracellular matrix, where it regulates nucleation of hydroxyapatite (By similarity).</text>
</comment>
<comment type="subunit">
    <text evidence="1">Interacts with importin alpha.</text>
</comment>
<comment type="subcellular location">
    <subcellularLocation>
        <location evidence="1">Nucleus</location>
    </subcellularLocation>
    <subcellularLocation>
        <location evidence="1">Cytoplasm</location>
    </subcellularLocation>
    <subcellularLocation>
        <location evidence="1">Secreted</location>
        <location evidence="1">Extracellular space</location>
        <location evidence="1">Extracellular matrix</location>
    </subcellularLocation>
    <text evidence="1">In proliferating preosteoblasts it is nuclear, during early maturation stage is cytoplasmic and in mature osteoblast localizes in the mineralized matrix. Export from the nucleus of differentiating osteoblast is triggered by the release of calcium from intracellular stores followed by a massive influx of this pool of calcium into the nucleus (By similarity).</text>
</comment>
<comment type="tissue specificity">
    <text>Expressed in tooth particularly in odontoblast, ameloblast and cementoblast. Also expressed in bone particularly in osteoblast.</text>
</comment>
<comment type="developmental stage">
    <text evidence="6 7">Expressed in early bell stage dental mesenchymal cells at 15.5 dpc (at protein level) (PubMed:24028588). Expressed in bell stage dental mesenchymal cells at 17.5 dpc (PubMed:29148101).</text>
</comment>
<comment type="PTM">
    <text evidence="1">Phosphorylated in the cytosol and extracellular matrix and unphosphorylated in the nucleus. Phosphorylation is necessary for nucleocytoplasmic transport and may be catalyzed by a nuclear isoform of CK2 and can be augmented by calcium. Phosphorylated (in vitro) by FAM20C in the extracellular medium at sites within the S-x-E/pS motif (By similarity).</text>
</comment>
<comment type="disruption phenotype">
    <text evidence="5">Mice display rickets and osteomalacia with isolated renal phosphate wasting associated with elevated FGF23 levels and normocalciuria.</text>
</comment>
<proteinExistence type="evidence at protein level"/>
<keyword id="KW-0091">Biomineralization</keyword>
<keyword id="KW-0963">Cytoplasm</keyword>
<keyword id="KW-0272">Extracellular matrix</keyword>
<keyword id="KW-0325">Glycoprotein</keyword>
<keyword id="KW-0539">Nucleus</keyword>
<keyword id="KW-0597">Phosphoprotein</keyword>
<keyword id="KW-1185">Reference proteome</keyword>
<keyword id="KW-0964">Secreted</keyword>
<keyword id="KW-0732">Signal</keyword>
<reference key="1">
    <citation type="journal article" date="1998" name="J. Bone Miner. Res.">
        <title>Identification of a novel isoform of mouse dentin matrix protein 1: spatial expression in mineralized tissues.</title>
        <authorList>
            <person name="McDougall M."/>
            <person name="Gu T.T."/>
            <person name="Luan X."/>
            <person name="Simmons D."/>
            <person name="Chen J."/>
        </authorList>
    </citation>
    <scope>NUCLEOTIDE SEQUENCE [MRNA]</scope>
    <source>
        <strain>Swiss Webster</strain>
        <tissue>Molar</tissue>
    </source>
</reference>
<reference key="2">
    <citation type="submission" date="1999-05" db="EMBL/GenBank/DDBJ databases">
        <title>Study of murine Dmp-1 gene function and regulation.</title>
        <authorList>
            <person name="Feng J.Q."/>
            <person name="Traianedes K."/>
            <person name="Luan X."/>
            <person name="McDougall M."/>
        </authorList>
    </citation>
    <scope>NUCLEOTIDE SEQUENCE [GENOMIC DNA]</scope>
    <source>
        <strain>129/SvJ</strain>
        <tissue>Spleen</tissue>
    </source>
</reference>
<reference key="3">
    <citation type="journal article" date="2005" name="Science">
        <title>The transcriptional landscape of the mammalian genome.</title>
        <authorList>
            <person name="Carninci P."/>
            <person name="Kasukawa T."/>
            <person name="Katayama S."/>
            <person name="Gough J."/>
            <person name="Frith M.C."/>
            <person name="Maeda N."/>
            <person name="Oyama R."/>
            <person name="Ravasi T."/>
            <person name="Lenhard B."/>
            <person name="Wells C."/>
            <person name="Kodzius R."/>
            <person name="Shimokawa K."/>
            <person name="Bajic V.B."/>
            <person name="Brenner S.E."/>
            <person name="Batalov S."/>
            <person name="Forrest A.R."/>
            <person name="Zavolan M."/>
            <person name="Davis M.J."/>
            <person name="Wilming L.G."/>
            <person name="Aidinis V."/>
            <person name="Allen J.E."/>
            <person name="Ambesi-Impiombato A."/>
            <person name="Apweiler R."/>
            <person name="Aturaliya R.N."/>
            <person name="Bailey T.L."/>
            <person name="Bansal M."/>
            <person name="Baxter L."/>
            <person name="Beisel K.W."/>
            <person name="Bersano T."/>
            <person name="Bono H."/>
            <person name="Chalk A.M."/>
            <person name="Chiu K.P."/>
            <person name="Choudhary V."/>
            <person name="Christoffels A."/>
            <person name="Clutterbuck D.R."/>
            <person name="Crowe M.L."/>
            <person name="Dalla E."/>
            <person name="Dalrymple B.P."/>
            <person name="de Bono B."/>
            <person name="Della Gatta G."/>
            <person name="di Bernardo D."/>
            <person name="Down T."/>
            <person name="Engstrom P."/>
            <person name="Fagiolini M."/>
            <person name="Faulkner G."/>
            <person name="Fletcher C.F."/>
            <person name="Fukushima T."/>
            <person name="Furuno M."/>
            <person name="Futaki S."/>
            <person name="Gariboldi M."/>
            <person name="Georgii-Hemming P."/>
            <person name="Gingeras T.R."/>
            <person name="Gojobori T."/>
            <person name="Green R.E."/>
            <person name="Gustincich S."/>
            <person name="Harbers M."/>
            <person name="Hayashi Y."/>
            <person name="Hensch T.K."/>
            <person name="Hirokawa N."/>
            <person name="Hill D."/>
            <person name="Huminiecki L."/>
            <person name="Iacono M."/>
            <person name="Ikeo K."/>
            <person name="Iwama A."/>
            <person name="Ishikawa T."/>
            <person name="Jakt M."/>
            <person name="Kanapin A."/>
            <person name="Katoh M."/>
            <person name="Kawasawa Y."/>
            <person name="Kelso J."/>
            <person name="Kitamura H."/>
            <person name="Kitano H."/>
            <person name="Kollias G."/>
            <person name="Krishnan S.P."/>
            <person name="Kruger A."/>
            <person name="Kummerfeld S.K."/>
            <person name="Kurochkin I.V."/>
            <person name="Lareau L.F."/>
            <person name="Lazarevic D."/>
            <person name="Lipovich L."/>
            <person name="Liu J."/>
            <person name="Liuni S."/>
            <person name="McWilliam S."/>
            <person name="Madan Babu M."/>
            <person name="Madera M."/>
            <person name="Marchionni L."/>
            <person name="Matsuda H."/>
            <person name="Matsuzawa S."/>
            <person name="Miki H."/>
            <person name="Mignone F."/>
            <person name="Miyake S."/>
            <person name="Morris K."/>
            <person name="Mottagui-Tabar S."/>
            <person name="Mulder N."/>
            <person name="Nakano N."/>
            <person name="Nakauchi H."/>
            <person name="Ng P."/>
            <person name="Nilsson R."/>
            <person name="Nishiguchi S."/>
            <person name="Nishikawa S."/>
            <person name="Nori F."/>
            <person name="Ohara O."/>
            <person name="Okazaki Y."/>
            <person name="Orlando V."/>
            <person name="Pang K.C."/>
            <person name="Pavan W.J."/>
            <person name="Pavesi G."/>
            <person name="Pesole G."/>
            <person name="Petrovsky N."/>
            <person name="Piazza S."/>
            <person name="Reed J."/>
            <person name="Reid J.F."/>
            <person name="Ring B.Z."/>
            <person name="Ringwald M."/>
            <person name="Rost B."/>
            <person name="Ruan Y."/>
            <person name="Salzberg S.L."/>
            <person name="Sandelin A."/>
            <person name="Schneider C."/>
            <person name="Schoenbach C."/>
            <person name="Sekiguchi K."/>
            <person name="Semple C.A."/>
            <person name="Seno S."/>
            <person name="Sessa L."/>
            <person name="Sheng Y."/>
            <person name="Shibata Y."/>
            <person name="Shimada H."/>
            <person name="Shimada K."/>
            <person name="Silva D."/>
            <person name="Sinclair B."/>
            <person name="Sperling S."/>
            <person name="Stupka E."/>
            <person name="Sugiura K."/>
            <person name="Sultana R."/>
            <person name="Takenaka Y."/>
            <person name="Taki K."/>
            <person name="Tammoja K."/>
            <person name="Tan S.L."/>
            <person name="Tang S."/>
            <person name="Taylor M.S."/>
            <person name="Tegner J."/>
            <person name="Teichmann S.A."/>
            <person name="Ueda H.R."/>
            <person name="van Nimwegen E."/>
            <person name="Verardo R."/>
            <person name="Wei C.L."/>
            <person name="Yagi K."/>
            <person name="Yamanishi H."/>
            <person name="Zabarovsky E."/>
            <person name="Zhu S."/>
            <person name="Zimmer A."/>
            <person name="Hide W."/>
            <person name="Bult C."/>
            <person name="Grimmond S.M."/>
            <person name="Teasdale R.D."/>
            <person name="Liu E.T."/>
            <person name="Brusic V."/>
            <person name="Quackenbush J."/>
            <person name="Wahlestedt C."/>
            <person name="Mattick J.S."/>
            <person name="Hume D.A."/>
            <person name="Kai C."/>
            <person name="Sasaki D."/>
            <person name="Tomaru Y."/>
            <person name="Fukuda S."/>
            <person name="Kanamori-Katayama M."/>
            <person name="Suzuki M."/>
            <person name="Aoki J."/>
            <person name="Arakawa T."/>
            <person name="Iida J."/>
            <person name="Imamura K."/>
            <person name="Itoh M."/>
            <person name="Kato T."/>
            <person name="Kawaji H."/>
            <person name="Kawagashira N."/>
            <person name="Kawashima T."/>
            <person name="Kojima M."/>
            <person name="Kondo S."/>
            <person name="Konno H."/>
            <person name="Nakano K."/>
            <person name="Ninomiya N."/>
            <person name="Nishio T."/>
            <person name="Okada M."/>
            <person name="Plessy C."/>
            <person name="Shibata K."/>
            <person name="Shiraki T."/>
            <person name="Suzuki S."/>
            <person name="Tagami M."/>
            <person name="Waki K."/>
            <person name="Watahiki A."/>
            <person name="Okamura-Oho Y."/>
            <person name="Suzuki H."/>
            <person name="Kawai J."/>
            <person name="Hayashizaki Y."/>
        </authorList>
    </citation>
    <scope>NUCLEOTIDE SEQUENCE [LARGE SCALE MRNA]</scope>
    <source>
        <strain>C57BL/6J</strain>
        <tissue>Head</tissue>
        <tissue>Inner ear</tissue>
    </source>
</reference>
<reference key="4">
    <citation type="submission" date="2005-09" db="EMBL/GenBank/DDBJ databases">
        <authorList>
            <person name="Mural R.J."/>
            <person name="Adams M.D."/>
            <person name="Myers E.W."/>
            <person name="Smith H.O."/>
            <person name="Venter J.C."/>
        </authorList>
    </citation>
    <scope>NUCLEOTIDE SEQUENCE [LARGE SCALE GENOMIC DNA]</scope>
</reference>
<reference key="5">
    <citation type="journal article" date="2006" name="Nat. Genet.">
        <title>Loss of DMP1 causes rickets and osteomalacia and identifies a role for osteocytes in mineral metabolism.</title>
        <authorList>
            <person name="Feng J.Q."/>
            <person name="Ward L.M."/>
            <person name="Liu S."/>
            <person name="Lu Y."/>
            <person name="Xie Y."/>
            <person name="Yuan B."/>
            <person name="Yu X."/>
            <person name="Rauch F."/>
            <person name="Davis S.I."/>
            <person name="Zhang S."/>
            <person name="Rios H."/>
            <person name="Drezner M.K."/>
            <person name="Quarles L.D."/>
            <person name="Bonewald L.F."/>
            <person name="White K.E."/>
        </authorList>
    </citation>
    <scope>DISRUPTION PHENOTYPE</scope>
</reference>
<reference key="6">
    <citation type="journal article" date="2013" name="Eur. J. Oral Sci.">
        <title>Msx1 regulates proliferation and differentiation of mouse dental mesenchymal cells in culture.</title>
        <authorList>
            <person name="Feng X.Y."/>
            <person name="Zhao Y.M."/>
            <person name="Wang W.J."/>
            <person name="Ge L.H."/>
        </authorList>
    </citation>
    <scope>DEVELOPMENTAL STAGE</scope>
</reference>
<reference key="7">
    <citation type="journal article" date="2018" name="Eur. J. Oral Sci.">
        <title>Homeobox protein MSX-1 inhibits expression of bone morphogenetic protein 2, bone morphogenetic protein 4, and lymphoid enhancer-binding factor 1 via Wnt/beta-catenin signaling to prevent differentiation of dental mesenchymal cells during the late bell stage.</title>
        <authorList>
            <person name="Feng X.Y."/>
            <person name="Wu X.S."/>
            <person name="Wang J.S."/>
            <person name="Zhang C.M."/>
            <person name="Wang S.L."/>
        </authorList>
    </citation>
    <scope>DEVELOPMENTAL STAGE</scope>
</reference>
<dbReference type="EMBL" id="U65020">
    <property type="protein sequence ID" value="AAB93764.1"/>
    <property type="molecule type" value="mRNA"/>
</dbReference>
<dbReference type="EMBL" id="AJ242625">
    <property type="protein sequence ID" value="CAB59629.1"/>
    <property type="molecule type" value="Genomic_DNA"/>
</dbReference>
<dbReference type="EMBL" id="AK132177">
    <property type="protein sequence ID" value="BAE21014.1"/>
    <property type="molecule type" value="mRNA"/>
</dbReference>
<dbReference type="EMBL" id="AK157973">
    <property type="protein sequence ID" value="BAE34293.1"/>
    <property type="molecule type" value="mRNA"/>
</dbReference>
<dbReference type="EMBL" id="CH466529">
    <property type="protein sequence ID" value="EDL20228.1"/>
    <property type="molecule type" value="Genomic_DNA"/>
</dbReference>
<dbReference type="CCDS" id="CCDS19484.1"/>
<dbReference type="RefSeq" id="NP_001345942.1">
    <property type="nucleotide sequence ID" value="NM_001359013.1"/>
</dbReference>
<dbReference type="RefSeq" id="NP_058059.2">
    <property type="nucleotide sequence ID" value="NM_016779.2"/>
</dbReference>
<dbReference type="RefSeq" id="XP_006534829.1">
    <property type="nucleotide sequence ID" value="XM_006534766.2"/>
</dbReference>
<dbReference type="BioGRID" id="199246">
    <property type="interactions" value="1"/>
</dbReference>
<dbReference type="FunCoup" id="O55188">
    <property type="interactions" value="343"/>
</dbReference>
<dbReference type="STRING" id="10090.ENSMUSP00000068053"/>
<dbReference type="GlyCosmos" id="O55188">
    <property type="glycosylation" value="3 sites, No reported glycans"/>
</dbReference>
<dbReference type="GlyGen" id="O55188">
    <property type="glycosylation" value="4 sites"/>
</dbReference>
<dbReference type="iPTMnet" id="O55188"/>
<dbReference type="PhosphoSitePlus" id="O55188"/>
<dbReference type="jPOST" id="O55188"/>
<dbReference type="PaxDb" id="10090-ENSMUSP00000068053"/>
<dbReference type="PeptideAtlas" id="O55188"/>
<dbReference type="ProteomicsDB" id="279387"/>
<dbReference type="Antibodypedia" id="25470">
    <property type="antibodies" value="319 antibodies from 36 providers"/>
</dbReference>
<dbReference type="DNASU" id="13406"/>
<dbReference type="Ensembl" id="ENSMUST00000066708.7">
    <property type="protein sequence ID" value="ENSMUSP00000068053.6"/>
    <property type="gene ID" value="ENSMUSG00000029307.8"/>
</dbReference>
<dbReference type="GeneID" id="13406"/>
<dbReference type="KEGG" id="mmu:13406"/>
<dbReference type="UCSC" id="uc008yke.1">
    <property type="organism name" value="mouse"/>
</dbReference>
<dbReference type="AGR" id="MGI:94910"/>
<dbReference type="CTD" id="1758"/>
<dbReference type="MGI" id="MGI:94910">
    <property type="gene designation" value="Dmp1"/>
</dbReference>
<dbReference type="VEuPathDB" id="HostDB:ENSMUSG00000029307"/>
<dbReference type="eggNOG" id="KOG1181">
    <property type="taxonomic scope" value="Eukaryota"/>
</dbReference>
<dbReference type="GeneTree" id="ENSGT00730000111375"/>
<dbReference type="HOGENOM" id="CLU_040174_0_0_1"/>
<dbReference type="InParanoid" id="O55188"/>
<dbReference type="OMA" id="HDDNDCQ"/>
<dbReference type="OrthoDB" id="9048789at2759"/>
<dbReference type="TreeFam" id="TF337029"/>
<dbReference type="Reactome" id="R-MMU-3000178">
    <property type="pathway name" value="ECM proteoglycans"/>
</dbReference>
<dbReference type="Reactome" id="R-MMU-381426">
    <property type="pathway name" value="Regulation of Insulin-like Growth Factor (IGF) transport and uptake by Insulin-like Growth Factor Binding Proteins (IGFBPs)"/>
</dbReference>
<dbReference type="Reactome" id="R-MMU-8957275">
    <property type="pathway name" value="Post-translational protein phosphorylation"/>
</dbReference>
<dbReference type="BioGRID-ORCS" id="13406">
    <property type="hits" value="2 hits in 78 CRISPR screens"/>
</dbReference>
<dbReference type="ChiTaRS" id="Dmp1">
    <property type="organism name" value="mouse"/>
</dbReference>
<dbReference type="PRO" id="PR:O55188"/>
<dbReference type="Proteomes" id="UP000000589">
    <property type="component" value="Chromosome 5"/>
</dbReference>
<dbReference type="RNAct" id="O55188">
    <property type="molecule type" value="protein"/>
</dbReference>
<dbReference type="Bgee" id="ENSMUSG00000029307">
    <property type="expression patterns" value="Expressed in hindlimb long bone and 98 other cell types or tissues"/>
</dbReference>
<dbReference type="GO" id="GO:0005737">
    <property type="term" value="C:cytoplasm"/>
    <property type="evidence" value="ECO:0000314"/>
    <property type="project" value="MGI"/>
</dbReference>
<dbReference type="GO" id="GO:0031012">
    <property type="term" value="C:extracellular matrix"/>
    <property type="evidence" value="ECO:0000314"/>
    <property type="project" value="MGI"/>
</dbReference>
<dbReference type="GO" id="GO:0005576">
    <property type="term" value="C:extracellular region"/>
    <property type="evidence" value="ECO:0007669"/>
    <property type="project" value="UniProtKB-KW"/>
</dbReference>
<dbReference type="GO" id="GO:0005634">
    <property type="term" value="C:nucleus"/>
    <property type="evidence" value="ECO:0000314"/>
    <property type="project" value="MGI"/>
</dbReference>
<dbReference type="GO" id="GO:0050840">
    <property type="term" value="F:extracellular matrix binding"/>
    <property type="evidence" value="ECO:0000314"/>
    <property type="project" value="MGI"/>
</dbReference>
<dbReference type="GO" id="GO:0031214">
    <property type="term" value="P:biomineral tissue development"/>
    <property type="evidence" value="ECO:0007669"/>
    <property type="project" value="UniProtKB-KW"/>
</dbReference>
<dbReference type="GO" id="GO:0030198">
    <property type="term" value="P:extracellular matrix organization"/>
    <property type="evidence" value="ECO:0000314"/>
    <property type="project" value="MGI"/>
</dbReference>
<dbReference type="GO" id="GO:0001503">
    <property type="term" value="P:ossification"/>
    <property type="evidence" value="ECO:0007669"/>
    <property type="project" value="InterPro"/>
</dbReference>
<dbReference type="GO" id="GO:0010811">
    <property type="term" value="P:positive regulation of cell-substrate adhesion"/>
    <property type="evidence" value="ECO:0000314"/>
    <property type="project" value="MGI"/>
</dbReference>
<dbReference type="GO" id="GO:0070173">
    <property type="term" value="P:regulation of enamel mineralization"/>
    <property type="evidence" value="ECO:0000314"/>
    <property type="project" value="MGI"/>
</dbReference>
<dbReference type="InterPro" id="IPR009889">
    <property type="entry name" value="DMP1"/>
</dbReference>
<dbReference type="PANTHER" id="PTHR23400">
    <property type="entry name" value="DENTIN MATRIX ACIDIC PHOSPHOPROTEIN 1"/>
    <property type="match status" value="1"/>
</dbReference>
<dbReference type="PANTHER" id="PTHR23400:SF0">
    <property type="entry name" value="DENTIN MATRIX ACIDIC PHOSPHOPROTEIN 1"/>
    <property type="match status" value="1"/>
</dbReference>
<dbReference type="Pfam" id="PF07263">
    <property type="entry name" value="DMP1"/>
    <property type="match status" value="1"/>
</dbReference>
<name>DMP1_MOUSE</name>
<protein>
    <recommendedName>
        <fullName evidence="2">Dentin matrix acidic phosphoprotein 1</fullName>
        <shortName evidence="8">DMP-1</shortName>
        <shortName evidence="10">Dentin matrix protein 1</shortName>
    </recommendedName>
    <alternativeName>
        <fullName evidence="10">AG1</fullName>
    </alternativeName>
</protein>
<organism>
    <name type="scientific">Mus musculus</name>
    <name type="common">Mouse</name>
    <dbReference type="NCBI Taxonomy" id="10090"/>
    <lineage>
        <taxon>Eukaryota</taxon>
        <taxon>Metazoa</taxon>
        <taxon>Chordata</taxon>
        <taxon>Craniata</taxon>
        <taxon>Vertebrata</taxon>
        <taxon>Euteleostomi</taxon>
        <taxon>Mammalia</taxon>
        <taxon>Eutheria</taxon>
        <taxon>Euarchontoglires</taxon>
        <taxon>Glires</taxon>
        <taxon>Rodentia</taxon>
        <taxon>Myomorpha</taxon>
        <taxon>Muroidea</taxon>
        <taxon>Muridae</taxon>
        <taxon>Murinae</taxon>
        <taxon>Mus</taxon>
        <taxon>Mus</taxon>
    </lineage>
</organism>
<gene>
    <name evidence="10" type="primary">Dmp1</name>
    <name type="synonym">Dmp</name>
</gene>
<feature type="signal peptide" evidence="3">
    <location>
        <begin position="1"/>
        <end position="16"/>
    </location>
</feature>
<feature type="chain" id="PRO_0000021111" description="Dentin matrix acidic phosphoprotein 1">
    <location>
        <begin position="17"/>
        <end position="503"/>
    </location>
</feature>
<feature type="region of interest" description="Disordered" evidence="4">
    <location>
        <begin position="23"/>
        <end position="503"/>
    </location>
</feature>
<feature type="short sequence motif" description="Cell attachment site" evidence="3">
    <location>
        <begin position="350"/>
        <end position="352"/>
    </location>
</feature>
<feature type="compositionally biased region" description="Basic and acidic residues" evidence="4">
    <location>
        <begin position="23"/>
        <end position="35"/>
    </location>
</feature>
<feature type="compositionally biased region" description="Polar residues" evidence="4">
    <location>
        <begin position="54"/>
        <end position="63"/>
    </location>
</feature>
<feature type="compositionally biased region" description="Acidic residues" evidence="4">
    <location>
        <begin position="98"/>
        <end position="119"/>
    </location>
</feature>
<feature type="compositionally biased region" description="Low complexity" evidence="4">
    <location>
        <begin position="138"/>
        <end position="150"/>
    </location>
</feature>
<feature type="compositionally biased region" description="Basic and acidic residues" evidence="4">
    <location>
        <begin position="158"/>
        <end position="175"/>
    </location>
</feature>
<feature type="compositionally biased region" description="Acidic residues" evidence="4">
    <location>
        <begin position="203"/>
        <end position="215"/>
    </location>
</feature>
<feature type="compositionally biased region" description="Basic and acidic residues" evidence="4">
    <location>
        <begin position="233"/>
        <end position="243"/>
    </location>
</feature>
<feature type="compositionally biased region" description="Basic and acidic residues" evidence="4">
    <location>
        <begin position="267"/>
        <end position="286"/>
    </location>
</feature>
<feature type="compositionally biased region" description="Basic and acidic residues" evidence="4">
    <location>
        <begin position="293"/>
        <end position="303"/>
    </location>
</feature>
<feature type="compositionally biased region" description="Low complexity" evidence="4">
    <location>
        <begin position="332"/>
        <end position="348"/>
    </location>
</feature>
<feature type="compositionally biased region" description="Acidic residues" evidence="4">
    <location>
        <begin position="362"/>
        <end position="373"/>
    </location>
</feature>
<feature type="compositionally biased region" description="Polar residues" evidence="4">
    <location>
        <begin position="407"/>
        <end position="418"/>
    </location>
</feature>
<feature type="compositionally biased region" description="Low complexity" evidence="4">
    <location>
        <begin position="419"/>
        <end position="435"/>
    </location>
</feature>
<feature type="compositionally biased region" description="Basic and acidic residues" evidence="4">
    <location>
        <begin position="467"/>
        <end position="492"/>
    </location>
</feature>
<feature type="compositionally biased region" description="Acidic residues" evidence="4">
    <location>
        <begin position="493"/>
        <end position="503"/>
    </location>
</feature>
<feature type="glycosylation site" description="N-linked (GlcNAc...) asparagine" evidence="3">
    <location>
        <position position="356"/>
    </location>
</feature>
<feature type="glycosylation site" description="N-linked (GlcNAc...) asparagine" evidence="3">
    <location>
        <position position="394"/>
    </location>
</feature>
<feature type="glycosylation site" description="N-linked (GlcNAc...) asparagine" evidence="3">
    <location>
        <position position="457"/>
    </location>
</feature>
<feature type="sequence conflict" description="In Ref. 1; AAB93764." evidence="9" ref="1">
    <original>G</original>
    <variation>D</variation>
    <location>
        <position position="35"/>
    </location>
</feature>
<feature type="sequence conflict" description="In Ref. 1; AAB93764 and 2; CAB59629." evidence="9" ref="1 2">
    <original>G</original>
    <variation>A</variation>
    <location>
        <position position="59"/>
    </location>
</feature>
<feature type="sequence conflict" description="In Ref. 1; AAB93764 and 2; CAB59629." evidence="9" ref="1 2">
    <original>D</original>
    <variation>H</variation>
    <location>
        <position position="67"/>
    </location>
</feature>
<feature type="sequence conflict" description="In Ref. 1; AAB93764 and 2; CAB59629." evidence="9" ref="1 2">
    <original>E</original>
    <variation>D</variation>
    <location>
        <position position="99"/>
    </location>
</feature>
<feature type="sequence conflict" description="In Ref. 1; AAB93764." evidence="9" ref="1">
    <original>D</original>
    <variation>G</variation>
    <location>
        <position position="116"/>
    </location>
</feature>
<feature type="sequence conflict" description="In Ref. 2; CAB59629." evidence="9" ref="2">
    <original>D</original>
    <variation>Y</variation>
    <location>
        <position position="116"/>
    </location>
</feature>
<feature type="sequence conflict" description="In Ref. 1; AAB93764 and 2; CAB59629." evidence="9" ref="1 2">
    <original>T</original>
    <variation>A</variation>
    <location>
        <position position="137"/>
    </location>
</feature>
<feature type="sequence conflict" description="In Ref. 1; AAB93764 and 2; CAB59629." evidence="9" ref="1 2">
    <original>H</original>
    <variation>Q</variation>
    <location>
        <position position="163"/>
    </location>
</feature>
<feature type="sequence conflict" description="In Ref. 1; AAB93764 and 2; CAB59629." evidence="9" ref="1 2">
    <original>EAD</original>
    <variation>DAH</variation>
    <location>
        <begin position="168"/>
        <end position="170"/>
    </location>
</feature>
<feature type="sequence conflict" description="In Ref. 1; AAB93764 and 2; CAB59629." evidence="9" ref="1 2">
    <original>E</original>
    <variation>D</variation>
    <location>
        <position position="174"/>
    </location>
</feature>
<feature type="sequence conflict" description="In Ref. 1; AAB93764 and 2; CAB59629." evidence="9" ref="1 2">
    <original>TQD</original>
    <variation>AQH</variation>
    <location>
        <begin position="179"/>
        <end position="181"/>
    </location>
</feature>
<feature type="sequence conflict" description="In Ref. 1; AAB93764 and 2; CAB59629." evidence="9" ref="1 2">
    <original>E</original>
    <variation>Q</variation>
    <location>
        <position position="196"/>
    </location>
</feature>
<feature type="sequence conflict" description="In Ref. 1; AAB93764 and 2; CAB59629." evidence="9" ref="1 2">
    <original>H</original>
    <variation>R</variation>
    <location>
        <position position="241"/>
    </location>
</feature>
<feature type="sequence conflict" description="In Ref. 1; AAB93764 and 2; CAB59629." evidence="9" ref="1 2">
    <original>H</original>
    <variation>R</variation>
    <location>
        <position position="267"/>
    </location>
</feature>
<feature type="sequence conflict" description="In Ref. 1; AAB93764 and 2; CAB59629." evidence="9" ref="1 2">
    <original>A</original>
    <variation>T</variation>
    <location>
        <position position="360"/>
    </location>
</feature>
<sequence length="503" mass="53965">MKTVILLVFLWGLSCALPVARYHNTESESSEERTGDLAGSPPPPTNSESSEESQASPEGQANSDHTDSSESGEELGYDRGQYRPAGGLSKSTGTGADKEDDEDDSGDDTFGDEDNDLGPEEGQWGGPSKLDSDEDSTDTTQSSEDSTSQENSAQDTPSDSKDHDSEDEADSRPEAGDSTQDSESEEQRVGGGSEGESSHGDGSEFDDEGMQSDDPESTRSDRGHARMSSAGIRSEESKGDHEPTSTQDSDDSQSVEFSSRKSFRRSHVSEEDYRGELTDSNSRETQSDSTEDTASKEESRSESQEDTAESQSQEDSPEGQDPSSESSEEAGEPSQESSSESQEGVTSESRGDNPDNTSQAGDQEDSESSEEDSLNTFSSSESQSTEEQADSESNESLSLSEESQESAQDGDSSSQEGLQSQSASTESRSQESQSEQDSRSEEDSDSQDSSRSKEESNSTGSASSSEEDIRPKNMEADSRKLIVDAYHNKPIGDQDDNDCQDGY</sequence>
<evidence type="ECO:0000250" key="1"/>
<evidence type="ECO:0000250" key="2">
    <source>
        <dbReference type="UniProtKB" id="Q13316"/>
    </source>
</evidence>
<evidence type="ECO:0000255" key="3"/>
<evidence type="ECO:0000256" key="4">
    <source>
        <dbReference type="SAM" id="MobiDB-lite"/>
    </source>
</evidence>
<evidence type="ECO:0000269" key="5">
    <source>
    </source>
</evidence>
<evidence type="ECO:0000269" key="6">
    <source>
    </source>
</evidence>
<evidence type="ECO:0000269" key="7">
    <source>
    </source>
</evidence>
<evidence type="ECO:0000303" key="8">
    <source ref="2"/>
</evidence>
<evidence type="ECO:0000305" key="9"/>
<evidence type="ECO:0000312" key="10">
    <source>
        <dbReference type="MGI" id="MGI:94910"/>
    </source>
</evidence>